<organism>
    <name type="scientific">Malacoplasma penetrans (strain HF-2)</name>
    <name type="common">Mycoplasma penetrans</name>
    <dbReference type="NCBI Taxonomy" id="272633"/>
    <lineage>
        <taxon>Bacteria</taxon>
        <taxon>Bacillati</taxon>
        <taxon>Mycoplasmatota</taxon>
        <taxon>Mycoplasmoidales</taxon>
        <taxon>Mycoplasmoidaceae</taxon>
        <taxon>Malacoplasma</taxon>
    </lineage>
</organism>
<reference key="1">
    <citation type="journal article" date="2002" name="Nucleic Acids Res.">
        <title>The complete genomic sequence of Mycoplasma penetrans, an intracellular bacterial pathogen in humans.</title>
        <authorList>
            <person name="Sasaki Y."/>
            <person name="Ishikawa J."/>
            <person name="Yamashita A."/>
            <person name="Oshima K."/>
            <person name="Kenri T."/>
            <person name="Furuya K."/>
            <person name="Yoshino C."/>
            <person name="Horino A."/>
            <person name="Shiba T."/>
            <person name="Sasaki T."/>
            <person name="Hattori M."/>
        </authorList>
    </citation>
    <scope>NUCLEOTIDE SEQUENCE [LARGE SCALE GENOMIC DNA]</scope>
    <source>
        <strain>HF-2</strain>
    </source>
</reference>
<name>YQGF_MALP2</name>
<keyword id="KW-0963">Cytoplasm</keyword>
<keyword id="KW-0378">Hydrolase</keyword>
<keyword id="KW-0540">Nuclease</keyword>
<keyword id="KW-1185">Reference proteome</keyword>
<keyword id="KW-0690">Ribosome biogenesis</keyword>
<evidence type="ECO:0000255" key="1">
    <source>
        <dbReference type="HAMAP-Rule" id="MF_00651"/>
    </source>
</evidence>
<protein>
    <recommendedName>
        <fullName evidence="1">Putative pre-16S rRNA nuclease</fullName>
        <ecNumber evidence="1">3.1.-.-</ecNumber>
    </recommendedName>
</protein>
<sequence>MQNLNSKILAIDFGTKIIGTAINDINLNLCLPYCEITNNELKFKKILEIVEEENIKEIVIGFPKTQNSYVSERHQLIIDFKNQLSELLKNKNIEICFFDESYSTKSSKESLMNFNVKTSKLKKNKDMIAASIILENYLASKK</sequence>
<proteinExistence type="inferred from homology"/>
<accession>Q8EUR7</accession>
<dbReference type="EC" id="3.1.-.-" evidence="1"/>
<dbReference type="EMBL" id="BA000026">
    <property type="protein sequence ID" value="BAC44645.1"/>
    <property type="molecule type" value="Genomic_DNA"/>
</dbReference>
<dbReference type="RefSeq" id="WP_011077674.1">
    <property type="nucleotide sequence ID" value="NC_004432.1"/>
</dbReference>
<dbReference type="SMR" id="Q8EUR7"/>
<dbReference type="FunCoup" id="Q8EUR7">
    <property type="interactions" value="134"/>
</dbReference>
<dbReference type="STRING" id="272633.gene:10731975"/>
<dbReference type="KEGG" id="mpe:MYPE8530"/>
<dbReference type="eggNOG" id="COG0816">
    <property type="taxonomic scope" value="Bacteria"/>
</dbReference>
<dbReference type="HOGENOM" id="CLU_098240_2_2_14"/>
<dbReference type="InParanoid" id="Q8EUR7"/>
<dbReference type="Proteomes" id="UP000002522">
    <property type="component" value="Chromosome"/>
</dbReference>
<dbReference type="GO" id="GO:0005829">
    <property type="term" value="C:cytosol"/>
    <property type="evidence" value="ECO:0007669"/>
    <property type="project" value="TreeGrafter"/>
</dbReference>
<dbReference type="GO" id="GO:0004518">
    <property type="term" value="F:nuclease activity"/>
    <property type="evidence" value="ECO:0007669"/>
    <property type="project" value="UniProtKB-KW"/>
</dbReference>
<dbReference type="GO" id="GO:0000967">
    <property type="term" value="P:rRNA 5'-end processing"/>
    <property type="evidence" value="ECO:0007669"/>
    <property type="project" value="UniProtKB-UniRule"/>
</dbReference>
<dbReference type="CDD" id="cd16964">
    <property type="entry name" value="YqgF"/>
    <property type="match status" value="1"/>
</dbReference>
<dbReference type="Gene3D" id="3.30.420.140">
    <property type="entry name" value="YqgF/RNase H-like domain"/>
    <property type="match status" value="1"/>
</dbReference>
<dbReference type="HAMAP" id="MF_00651">
    <property type="entry name" value="Nuclease_YqgF"/>
    <property type="match status" value="1"/>
</dbReference>
<dbReference type="InterPro" id="IPR012337">
    <property type="entry name" value="RNaseH-like_sf"/>
</dbReference>
<dbReference type="InterPro" id="IPR005227">
    <property type="entry name" value="YqgF"/>
</dbReference>
<dbReference type="InterPro" id="IPR006641">
    <property type="entry name" value="YqgF/RNaseH-like_dom"/>
</dbReference>
<dbReference type="InterPro" id="IPR037027">
    <property type="entry name" value="YqgF/RNaseH-like_dom_sf"/>
</dbReference>
<dbReference type="NCBIfam" id="TIGR00250">
    <property type="entry name" value="RNAse_H_YqgF"/>
    <property type="match status" value="1"/>
</dbReference>
<dbReference type="PANTHER" id="PTHR33317">
    <property type="entry name" value="POLYNUCLEOTIDYL TRANSFERASE, RIBONUCLEASE H-LIKE SUPERFAMILY PROTEIN"/>
    <property type="match status" value="1"/>
</dbReference>
<dbReference type="PANTHER" id="PTHR33317:SF4">
    <property type="entry name" value="POLYNUCLEOTIDYL TRANSFERASE, RIBONUCLEASE H-LIKE SUPERFAMILY PROTEIN"/>
    <property type="match status" value="1"/>
</dbReference>
<dbReference type="Pfam" id="PF03652">
    <property type="entry name" value="RuvX"/>
    <property type="match status" value="1"/>
</dbReference>
<dbReference type="SMART" id="SM00732">
    <property type="entry name" value="YqgFc"/>
    <property type="match status" value="1"/>
</dbReference>
<dbReference type="SUPFAM" id="SSF53098">
    <property type="entry name" value="Ribonuclease H-like"/>
    <property type="match status" value="1"/>
</dbReference>
<feature type="chain" id="PRO_0000172097" description="Putative pre-16S rRNA nuclease">
    <location>
        <begin position="1"/>
        <end position="142"/>
    </location>
</feature>
<comment type="function">
    <text evidence="1">Could be a nuclease involved in processing of the 5'-end of pre-16S rRNA.</text>
</comment>
<comment type="subcellular location">
    <subcellularLocation>
        <location evidence="1">Cytoplasm</location>
    </subcellularLocation>
</comment>
<comment type="similarity">
    <text evidence="1">Belongs to the YqgF nuclease family.</text>
</comment>
<gene>
    <name type="ordered locus">MYPE8530</name>
</gene>